<organism>
    <name type="scientific">Lactobacillus johnsonii (strain CNCM I-12250 / La1 / NCC 533)</name>
    <dbReference type="NCBI Taxonomy" id="257314"/>
    <lineage>
        <taxon>Bacteria</taxon>
        <taxon>Bacillati</taxon>
        <taxon>Bacillota</taxon>
        <taxon>Bacilli</taxon>
        <taxon>Lactobacillales</taxon>
        <taxon>Lactobacillaceae</taxon>
        <taxon>Lactobacillus</taxon>
    </lineage>
</organism>
<dbReference type="EMBL" id="AE017198">
    <property type="protein sequence ID" value="AAS08699.1"/>
    <property type="molecule type" value="Genomic_DNA"/>
</dbReference>
<dbReference type="RefSeq" id="WP_011161786.1">
    <property type="nucleotide sequence ID" value="NC_005362.1"/>
</dbReference>
<dbReference type="SMR" id="Q74K75"/>
<dbReference type="KEGG" id="ljo:LJ_0878"/>
<dbReference type="eggNOG" id="COG0691">
    <property type="taxonomic scope" value="Bacteria"/>
</dbReference>
<dbReference type="HOGENOM" id="CLU_108953_0_0_9"/>
<dbReference type="Proteomes" id="UP000000581">
    <property type="component" value="Chromosome"/>
</dbReference>
<dbReference type="GO" id="GO:0005829">
    <property type="term" value="C:cytosol"/>
    <property type="evidence" value="ECO:0007669"/>
    <property type="project" value="TreeGrafter"/>
</dbReference>
<dbReference type="GO" id="GO:0003723">
    <property type="term" value="F:RNA binding"/>
    <property type="evidence" value="ECO:0007669"/>
    <property type="project" value="UniProtKB-UniRule"/>
</dbReference>
<dbReference type="GO" id="GO:0070929">
    <property type="term" value="P:trans-translation"/>
    <property type="evidence" value="ECO:0007669"/>
    <property type="project" value="UniProtKB-UniRule"/>
</dbReference>
<dbReference type="CDD" id="cd09294">
    <property type="entry name" value="SmpB"/>
    <property type="match status" value="1"/>
</dbReference>
<dbReference type="Gene3D" id="2.40.280.10">
    <property type="match status" value="1"/>
</dbReference>
<dbReference type="HAMAP" id="MF_00023">
    <property type="entry name" value="SmpB"/>
    <property type="match status" value="1"/>
</dbReference>
<dbReference type="InterPro" id="IPR023620">
    <property type="entry name" value="SmpB"/>
</dbReference>
<dbReference type="InterPro" id="IPR000037">
    <property type="entry name" value="SsrA-bd_prot"/>
</dbReference>
<dbReference type="InterPro" id="IPR020081">
    <property type="entry name" value="SsrA-bd_prot_CS"/>
</dbReference>
<dbReference type="NCBIfam" id="NF003843">
    <property type="entry name" value="PRK05422.1"/>
    <property type="match status" value="1"/>
</dbReference>
<dbReference type="NCBIfam" id="TIGR00086">
    <property type="entry name" value="smpB"/>
    <property type="match status" value="1"/>
</dbReference>
<dbReference type="PANTHER" id="PTHR30308:SF2">
    <property type="entry name" value="SSRA-BINDING PROTEIN"/>
    <property type="match status" value="1"/>
</dbReference>
<dbReference type="PANTHER" id="PTHR30308">
    <property type="entry name" value="TMRNA-BINDING COMPONENT OF TRANS-TRANSLATION TAGGING COMPLEX"/>
    <property type="match status" value="1"/>
</dbReference>
<dbReference type="Pfam" id="PF01668">
    <property type="entry name" value="SmpB"/>
    <property type="match status" value="1"/>
</dbReference>
<dbReference type="SUPFAM" id="SSF74982">
    <property type="entry name" value="Small protein B (SmpB)"/>
    <property type="match status" value="1"/>
</dbReference>
<dbReference type="PROSITE" id="PS01317">
    <property type="entry name" value="SSRP"/>
    <property type="match status" value="1"/>
</dbReference>
<accession>Q74K75</accession>
<evidence type="ECO:0000255" key="1">
    <source>
        <dbReference type="HAMAP-Rule" id="MF_00023"/>
    </source>
</evidence>
<evidence type="ECO:0000256" key="2">
    <source>
        <dbReference type="SAM" id="MobiDB-lite"/>
    </source>
</evidence>
<reference key="1">
    <citation type="journal article" date="2004" name="Proc. Natl. Acad. Sci. U.S.A.">
        <title>The genome sequence of the probiotic intestinal bacterium Lactobacillus johnsonii NCC 533.</title>
        <authorList>
            <person name="Pridmore R.D."/>
            <person name="Berger B."/>
            <person name="Desiere F."/>
            <person name="Vilanova D."/>
            <person name="Barretto C."/>
            <person name="Pittet A.-C."/>
            <person name="Zwahlen M.-C."/>
            <person name="Rouvet M."/>
            <person name="Altermann E."/>
            <person name="Barrangou R."/>
            <person name="Mollet B."/>
            <person name="Mercenier A."/>
            <person name="Klaenhammer T."/>
            <person name="Arigoni F."/>
            <person name="Schell M.A."/>
        </authorList>
    </citation>
    <scope>NUCLEOTIDE SEQUENCE [LARGE SCALE GENOMIC DNA]</scope>
    <source>
        <strain>CNCM I-1225 / La1 / NCC 533</strain>
    </source>
</reference>
<gene>
    <name evidence="1" type="primary">smpB</name>
    <name type="ordered locus">LJ_0878</name>
</gene>
<protein>
    <recommendedName>
        <fullName evidence="1">SsrA-binding protein</fullName>
    </recommendedName>
    <alternativeName>
        <fullName evidence="1">Small protein B</fullName>
    </alternativeName>
</protein>
<name>SSRP_LACJO</name>
<proteinExistence type="inferred from homology"/>
<keyword id="KW-0963">Cytoplasm</keyword>
<keyword id="KW-0694">RNA-binding</keyword>
<feature type="chain" id="PRO_0000102964" description="SsrA-binding protein">
    <location>
        <begin position="1"/>
        <end position="151"/>
    </location>
</feature>
<feature type="region of interest" description="Disordered" evidence="2">
    <location>
        <begin position="132"/>
        <end position="151"/>
    </location>
</feature>
<comment type="function">
    <text evidence="1">Required for rescue of stalled ribosomes mediated by trans-translation. Binds to transfer-messenger RNA (tmRNA), required for stable association of tmRNA with ribosomes. tmRNA and SmpB together mimic tRNA shape, replacing the anticodon stem-loop with SmpB. tmRNA is encoded by the ssrA gene; the 2 termini fold to resemble tRNA(Ala) and it encodes a 'tag peptide', a short internal open reading frame. During trans-translation Ala-aminoacylated tmRNA acts like a tRNA, entering the A-site of stalled ribosomes, displacing the stalled mRNA. The ribosome then switches to translate the ORF on the tmRNA; the nascent peptide is terminated with the 'tag peptide' encoded by the tmRNA and targeted for degradation. The ribosome is freed to recommence translation, which seems to be the essential function of trans-translation.</text>
</comment>
<comment type="subcellular location">
    <subcellularLocation>
        <location evidence="1">Cytoplasm</location>
    </subcellularLocation>
    <text evidence="1">The tmRNA-SmpB complex associates with stalled 70S ribosomes.</text>
</comment>
<comment type="similarity">
    <text evidence="1">Belongs to the SmpB family.</text>
</comment>
<sequence length="151" mass="17433">MKQKADNLIAQNKKASHDYFIKETLEAGIALTGTEIKSIRARRINLRDGYVQIINGSAFLENVHISEYKEGNRYNHDPLRSRRLLLHKREIARLAGIQAQQGMAIIPLKVYLKHGFAKVLIGVGQGKKQYDKRQTIKKRDQDREIHRKYGI</sequence>